<reference key="1">
    <citation type="journal article" date="2005" name="Genome Biol.">
        <title>Full-length cDNAs from chicken bursal lymphocytes to facilitate gene function analysis.</title>
        <authorList>
            <person name="Caldwell R.B."/>
            <person name="Kierzek A.M."/>
            <person name="Arakawa H."/>
            <person name="Bezzubov Y."/>
            <person name="Zaim J."/>
            <person name="Fiedler P."/>
            <person name="Kutter S."/>
            <person name="Blagodatski A."/>
            <person name="Kostovska D."/>
            <person name="Koter M."/>
            <person name="Plachy J."/>
            <person name="Carninci P."/>
            <person name="Hayashizaki Y."/>
            <person name="Buerstedde J.-M."/>
        </authorList>
    </citation>
    <scope>NUCLEOTIDE SEQUENCE [LARGE SCALE MRNA]</scope>
    <source>
        <strain>CB</strain>
        <tissue>Bursa of Fabricius</tissue>
    </source>
</reference>
<proteinExistence type="evidence at transcript level"/>
<gene>
    <name type="primary">EDC3</name>
    <name type="synonym">YJDC</name>
    <name type="ORF">RCJMB04_5b1</name>
</gene>
<accession>Q5ZLS2</accession>
<dbReference type="EMBL" id="AJ719662">
    <property type="protein sequence ID" value="CAG31321.1"/>
    <property type="molecule type" value="mRNA"/>
</dbReference>
<dbReference type="RefSeq" id="NP_001025556.1">
    <property type="nucleotide sequence ID" value="NM_001030385.1"/>
</dbReference>
<dbReference type="SMR" id="Q5ZLS2"/>
<dbReference type="FunCoup" id="Q5ZLS2">
    <property type="interactions" value="1678"/>
</dbReference>
<dbReference type="STRING" id="9031.ENSGALP00000045770"/>
<dbReference type="PaxDb" id="9031-ENSGALP00000002041"/>
<dbReference type="GeneID" id="415294"/>
<dbReference type="KEGG" id="gga:415294"/>
<dbReference type="CTD" id="80153"/>
<dbReference type="VEuPathDB" id="HostDB:geneid_415294"/>
<dbReference type="eggNOG" id="KOG2585">
    <property type="taxonomic scope" value="Eukaryota"/>
</dbReference>
<dbReference type="InParanoid" id="Q5ZLS2"/>
<dbReference type="OrthoDB" id="10030313at2759"/>
<dbReference type="PhylomeDB" id="Q5ZLS2"/>
<dbReference type="PRO" id="PR:Q5ZLS2"/>
<dbReference type="Proteomes" id="UP000000539">
    <property type="component" value="Unassembled WGS sequence"/>
</dbReference>
<dbReference type="GO" id="GO:0000932">
    <property type="term" value="C:P-body"/>
    <property type="evidence" value="ECO:0000318"/>
    <property type="project" value="GO_Central"/>
</dbReference>
<dbReference type="GO" id="GO:0003729">
    <property type="term" value="F:mRNA binding"/>
    <property type="evidence" value="ECO:0000318"/>
    <property type="project" value="GO_Central"/>
</dbReference>
<dbReference type="GO" id="GO:0031087">
    <property type="term" value="P:deadenylation-independent decapping of nuclear-transcribed mRNA"/>
    <property type="evidence" value="ECO:0000318"/>
    <property type="project" value="GO_Central"/>
</dbReference>
<dbReference type="GO" id="GO:0033962">
    <property type="term" value="P:P-body assembly"/>
    <property type="evidence" value="ECO:0000318"/>
    <property type="project" value="GO_Central"/>
</dbReference>
<dbReference type="CDD" id="cd01737">
    <property type="entry name" value="LSm16_N"/>
    <property type="match status" value="1"/>
</dbReference>
<dbReference type="FunFam" id="2.30.30.100:FF:000026">
    <property type="entry name" value="Enhancer of mRNA-decapping protein 3"/>
    <property type="match status" value="1"/>
</dbReference>
<dbReference type="FunFam" id="3.40.50.10260:FF:000001">
    <property type="entry name" value="Enhancer of mRNA-decapping protein 3"/>
    <property type="match status" value="1"/>
</dbReference>
<dbReference type="Gene3D" id="2.30.30.100">
    <property type="match status" value="1"/>
</dbReference>
<dbReference type="Gene3D" id="3.40.50.10260">
    <property type="entry name" value="YjeF N-terminal domain"/>
    <property type="match status" value="1"/>
</dbReference>
<dbReference type="InterPro" id="IPR025762">
    <property type="entry name" value="DFDF"/>
</dbReference>
<dbReference type="InterPro" id="IPR019050">
    <property type="entry name" value="FDF_dom"/>
</dbReference>
<dbReference type="InterPro" id="IPR025609">
    <property type="entry name" value="Lsm14-like_N"/>
</dbReference>
<dbReference type="InterPro" id="IPR034107">
    <property type="entry name" value="Lsm16_N"/>
</dbReference>
<dbReference type="InterPro" id="IPR047575">
    <property type="entry name" value="Sm"/>
</dbReference>
<dbReference type="InterPro" id="IPR004443">
    <property type="entry name" value="YjeF_N_dom"/>
</dbReference>
<dbReference type="InterPro" id="IPR036652">
    <property type="entry name" value="YjeF_N_dom_sf"/>
</dbReference>
<dbReference type="PANTHER" id="PTHR13612">
    <property type="entry name" value="ENHANCER OF MRNA-DECAPPING PROTEIN 3"/>
    <property type="match status" value="1"/>
</dbReference>
<dbReference type="PANTHER" id="PTHR13612:SF0">
    <property type="entry name" value="ENHANCER OF MRNA-DECAPPING PROTEIN 3"/>
    <property type="match status" value="1"/>
</dbReference>
<dbReference type="Pfam" id="PF16598">
    <property type="entry name" value="Edc3_linker"/>
    <property type="match status" value="1"/>
</dbReference>
<dbReference type="Pfam" id="PF09532">
    <property type="entry name" value="FDF"/>
    <property type="match status" value="1"/>
</dbReference>
<dbReference type="Pfam" id="PF12701">
    <property type="entry name" value="LSM14"/>
    <property type="match status" value="1"/>
</dbReference>
<dbReference type="Pfam" id="PF03853">
    <property type="entry name" value="YjeF_N"/>
    <property type="match status" value="1"/>
</dbReference>
<dbReference type="SMART" id="SM01199">
    <property type="entry name" value="FDF"/>
    <property type="match status" value="1"/>
</dbReference>
<dbReference type="SMART" id="SM01271">
    <property type="entry name" value="LSM14"/>
    <property type="match status" value="1"/>
</dbReference>
<dbReference type="SUPFAM" id="SSF64153">
    <property type="entry name" value="YjeF N-terminal domain-like"/>
    <property type="match status" value="1"/>
</dbReference>
<dbReference type="PROSITE" id="PS51512">
    <property type="entry name" value="DFDF"/>
    <property type="match status" value="1"/>
</dbReference>
<dbReference type="PROSITE" id="PS52002">
    <property type="entry name" value="SM"/>
    <property type="match status" value="1"/>
</dbReference>
<dbReference type="PROSITE" id="PS51385">
    <property type="entry name" value="YJEF_N"/>
    <property type="match status" value="1"/>
</dbReference>
<protein>
    <recommendedName>
        <fullName>Enhancer of mRNA-decapping protein 3</fullName>
    </recommendedName>
    <alternativeName>
        <fullName>YjeF domain-containing protein 1</fullName>
    </alternativeName>
</protein>
<name>EDC3_CHICK</name>
<organism>
    <name type="scientific">Gallus gallus</name>
    <name type="common">Chicken</name>
    <dbReference type="NCBI Taxonomy" id="9031"/>
    <lineage>
        <taxon>Eukaryota</taxon>
        <taxon>Metazoa</taxon>
        <taxon>Chordata</taxon>
        <taxon>Craniata</taxon>
        <taxon>Vertebrata</taxon>
        <taxon>Euteleostomi</taxon>
        <taxon>Archelosauria</taxon>
        <taxon>Archosauria</taxon>
        <taxon>Dinosauria</taxon>
        <taxon>Saurischia</taxon>
        <taxon>Theropoda</taxon>
        <taxon>Coelurosauria</taxon>
        <taxon>Aves</taxon>
        <taxon>Neognathae</taxon>
        <taxon>Galloanserae</taxon>
        <taxon>Galliformes</taxon>
        <taxon>Phasianidae</taxon>
        <taxon>Phasianinae</taxon>
        <taxon>Gallus</taxon>
    </lineage>
</organism>
<sequence length="506" mass="56037">MATDWLGSIVSINCGESLGVYQGRVSAVDQVSQTISLTRPFHNGVKCLVPEVTFRAGDITELKILEIPGPGDSRQCGDLQQADTGIPGVGCQVGPSQNGTGKMLKKPFSSSAPQNIPRRTDMKNQDIIISPQQQCSKSYMDRHMETLSQSKGFRRRHNSWSSSSRHPNQVTPKKSGLKNGQMKSKDDECFGDDIDEIPDTDFDFEGNLALFDKAAVFEEIETYERRSGTRSRGTPNEKPARYRHDENILESEPIVYRRIVVPQNANKEFCTDSGLVVPSVSYELHKKLLSVAEKHGLTLERRLEMTGVCASQMALSLLGGPNRLNPKNVHQRPTVALLCGPHVKGAQGISCGRHLSNHDVHVILFLPNFVKMLESITNELNLFSSTQGQQVSSVKDLPDTPVDLVINCLDCHENAFLRDQPWYKAVVDWANQNRAPVLSIDPPISEMEQGIDAKWSLALGLPLPLGERAGRVYLCDIGIPQKVFQEVGINYHSPFGCKFVIPLHST</sequence>
<evidence type="ECO:0000250" key="1"/>
<evidence type="ECO:0000250" key="2">
    <source>
        <dbReference type="UniProtKB" id="Q96F86"/>
    </source>
</evidence>
<evidence type="ECO:0000255" key="3">
    <source>
        <dbReference type="PROSITE-ProRule" id="PRU00719"/>
    </source>
</evidence>
<evidence type="ECO:0000255" key="4">
    <source>
        <dbReference type="PROSITE-ProRule" id="PRU00845"/>
    </source>
</evidence>
<evidence type="ECO:0000255" key="5">
    <source>
        <dbReference type="PROSITE-ProRule" id="PRU01346"/>
    </source>
</evidence>
<evidence type="ECO:0000256" key="6">
    <source>
        <dbReference type="SAM" id="MobiDB-lite"/>
    </source>
</evidence>
<evidence type="ECO:0000305" key="7"/>
<feature type="chain" id="PRO_0000119058" description="Enhancer of mRNA-decapping protein 3">
    <location>
        <begin position="1"/>
        <end position="506"/>
    </location>
</feature>
<feature type="domain" description="Sm" evidence="5">
    <location>
        <begin position="1"/>
        <end position="68"/>
    </location>
</feature>
<feature type="domain" description="DFDF" evidence="4">
    <location>
        <begin position="190"/>
        <end position="226"/>
    </location>
</feature>
<feature type="domain" description="YjeF N-terminal" evidence="3">
    <location>
        <begin position="281"/>
        <end position="485"/>
    </location>
</feature>
<feature type="region of interest" description="Required for P-body targeting and interaction with DCP1A" evidence="1">
    <location>
        <begin position="1"/>
        <end position="79"/>
    </location>
</feature>
<feature type="region of interest" description="Disordered" evidence="6">
    <location>
        <begin position="99"/>
        <end position="118"/>
    </location>
</feature>
<feature type="region of interest" description="Disordered" evidence="6">
    <location>
        <begin position="149"/>
        <end position="188"/>
    </location>
</feature>
<feature type="region of interest" description="Required for interaction with DDX6" evidence="1">
    <location>
        <begin position="189"/>
        <end position="294"/>
    </location>
</feature>
<comment type="function">
    <text evidence="2">Binds single-stranded RNA. Involved in the process of mRNA degradation and in the positive regulation of mRNA decapping (By similarity).</text>
</comment>
<comment type="subcellular location">
    <subcellularLocation>
        <location evidence="1">Cytoplasm</location>
        <location evidence="1">P-body</location>
    </subcellularLocation>
    <text evidence="1">Processing bodies (PB).</text>
</comment>
<comment type="domain">
    <text evidence="1">The DFDF domain is unstructured by itself. It assumes a helical fold upon interaction with other proteins (By similarity).</text>
</comment>
<comment type="similarity">
    <text evidence="7">Belongs to the EDC3 family.</text>
</comment>
<keyword id="KW-0963">Cytoplasm</keyword>
<keyword id="KW-1185">Reference proteome</keyword>
<keyword id="KW-0694">RNA-binding</keyword>